<accession>B8GFS9</accession>
<comment type="domain">
    <text evidence="1">Contains an N-terminal DNA-binding winged helix-turn-helix domain and a C-terminal regulatory domain (or effector binding domain) resembling phosphoribosyltransferase (PRT) domain.</text>
</comment>
<comment type="similarity">
    <text evidence="1">Belongs to the purine/pyrimidine phosphoribosyltransferase family. GfcR subfamily.</text>
</comment>
<evidence type="ECO:0000255" key="1">
    <source>
        <dbReference type="HAMAP-Rule" id="MF_01214"/>
    </source>
</evidence>
<proteinExistence type="inferred from homology"/>
<dbReference type="EMBL" id="CP001338">
    <property type="protein sequence ID" value="ACL17962.1"/>
    <property type="molecule type" value="Genomic_DNA"/>
</dbReference>
<dbReference type="RefSeq" id="WP_012619281.1">
    <property type="nucleotide sequence ID" value="NC_011832.1"/>
</dbReference>
<dbReference type="SMR" id="B8GFS9"/>
<dbReference type="STRING" id="521011.Mpal_2698"/>
<dbReference type="GeneID" id="7272520"/>
<dbReference type="KEGG" id="mpl:Mpal_2698"/>
<dbReference type="eggNOG" id="arCOG00028">
    <property type="taxonomic scope" value="Archaea"/>
</dbReference>
<dbReference type="HOGENOM" id="CLU_111001_0_0_2"/>
<dbReference type="OrthoDB" id="68893at2157"/>
<dbReference type="Proteomes" id="UP000002457">
    <property type="component" value="Chromosome"/>
</dbReference>
<dbReference type="GO" id="GO:0003677">
    <property type="term" value="F:DNA binding"/>
    <property type="evidence" value="ECO:0007669"/>
    <property type="project" value="UniProtKB-UniRule"/>
</dbReference>
<dbReference type="GO" id="GO:0004588">
    <property type="term" value="F:orotate phosphoribosyltransferase activity"/>
    <property type="evidence" value="ECO:0007669"/>
    <property type="project" value="TreeGrafter"/>
</dbReference>
<dbReference type="GO" id="GO:0019856">
    <property type="term" value="P:pyrimidine nucleobase biosynthetic process"/>
    <property type="evidence" value="ECO:0007669"/>
    <property type="project" value="TreeGrafter"/>
</dbReference>
<dbReference type="GO" id="GO:0010468">
    <property type="term" value="P:regulation of gene expression"/>
    <property type="evidence" value="ECO:0007669"/>
    <property type="project" value="UniProtKB-UniRule"/>
</dbReference>
<dbReference type="GO" id="GO:0006222">
    <property type="term" value="P:UMP biosynthetic process"/>
    <property type="evidence" value="ECO:0007669"/>
    <property type="project" value="TreeGrafter"/>
</dbReference>
<dbReference type="CDD" id="cd06223">
    <property type="entry name" value="PRTases_typeI"/>
    <property type="match status" value="1"/>
</dbReference>
<dbReference type="Gene3D" id="3.40.50.2020">
    <property type="match status" value="1"/>
</dbReference>
<dbReference type="HAMAP" id="MF_01214">
    <property type="entry name" value="GfcR"/>
    <property type="match status" value="1"/>
</dbReference>
<dbReference type="InterPro" id="IPR022854">
    <property type="entry name" value="GfcR-like"/>
</dbReference>
<dbReference type="InterPro" id="IPR000836">
    <property type="entry name" value="PRibTrfase_dom"/>
</dbReference>
<dbReference type="InterPro" id="IPR029057">
    <property type="entry name" value="PRTase-like"/>
</dbReference>
<dbReference type="NCBIfam" id="NF002620">
    <property type="entry name" value="PRK02277.1"/>
    <property type="match status" value="1"/>
</dbReference>
<dbReference type="PANTHER" id="PTHR19278">
    <property type="entry name" value="OROTATE PHOSPHORIBOSYLTRANSFERASE"/>
    <property type="match status" value="1"/>
</dbReference>
<dbReference type="PANTHER" id="PTHR19278:SF41">
    <property type="entry name" value="PYRE-LIKE PROTEIN"/>
    <property type="match status" value="1"/>
</dbReference>
<dbReference type="Pfam" id="PF00156">
    <property type="entry name" value="Pribosyltran"/>
    <property type="match status" value="1"/>
</dbReference>
<dbReference type="SUPFAM" id="SSF53271">
    <property type="entry name" value="PRTase-like"/>
    <property type="match status" value="1"/>
</dbReference>
<dbReference type="PROSITE" id="PS00103">
    <property type="entry name" value="PUR_PYR_PR_TRANSFER"/>
    <property type="match status" value="1"/>
</dbReference>
<protein>
    <recommendedName>
        <fullName evidence="1">Transcriptional regulator GfcR</fullName>
    </recommendedName>
</protein>
<sequence length="206" mass="22394">MSSLDELIQKARMLLSEGHSPGQIADELSLSMETVTWLLTQKKGDTAPKDVHIDWTVVSSNGHLLDGIASLMIERYYCAHPFESVEGQCPSLGSNAIVGIALSGVPLATLIAQKEQMKLAIYHPAKHSSGENPVGSISGNFSQVGGENAIIVDDVITSGRTMHEVVRYLRRHKATPLAIWVLFDKLGIKEVEGVPVYSVFTISRID</sequence>
<gene>
    <name evidence="1" type="primary">gfcR</name>
    <name type="ordered locus">Mpal_2698</name>
</gene>
<reference key="1">
    <citation type="journal article" date="2015" name="Genome Announc.">
        <title>Complete Genome Sequence of Methanosphaerula palustris E1-9CT, a Hydrogenotrophic Methanogen Isolated from a Minerotrophic Fen Peatland.</title>
        <authorList>
            <person name="Cadillo-Quiroz H."/>
            <person name="Browne P."/>
            <person name="Kyrpides N."/>
            <person name="Woyke T."/>
            <person name="Goodwin L."/>
            <person name="Detter C."/>
            <person name="Yavitt J.B."/>
            <person name="Zinder S.H."/>
        </authorList>
    </citation>
    <scope>NUCLEOTIDE SEQUENCE [LARGE SCALE GENOMIC DNA]</scope>
    <source>
        <strain>ATCC BAA-1556 / DSM 19958 / E1-9c</strain>
    </source>
</reference>
<organism>
    <name type="scientific">Methanosphaerula palustris (strain ATCC BAA-1556 / DSM 19958 / E1-9c)</name>
    <dbReference type="NCBI Taxonomy" id="521011"/>
    <lineage>
        <taxon>Archaea</taxon>
        <taxon>Methanobacteriati</taxon>
        <taxon>Methanobacteriota</taxon>
        <taxon>Stenosarchaea group</taxon>
        <taxon>Methanomicrobia</taxon>
        <taxon>Methanomicrobiales</taxon>
        <taxon>Methanoregulaceae</taxon>
        <taxon>Methanosphaerula</taxon>
    </lineage>
</organism>
<name>GFCR_METPE</name>
<keyword id="KW-0238">DNA-binding</keyword>
<keyword id="KW-1185">Reference proteome</keyword>
<keyword id="KW-0804">Transcription</keyword>
<keyword id="KW-0805">Transcription regulation</keyword>
<feature type="chain" id="PRO_1000164743" description="Transcriptional regulator GfcR">
    <location>
        <begin position="1"/>
        <end position="206"/>
    </location>
</feature>